<comment type="function">
    <text evidence="7 8">Key decatenating enzyme that alters DNA topology by binding to two double-stranded DNA molecules, generating a double-stranded break in one of the strands, passing the intact strand through the broken strand, and religating the broken strand (PubMed:1331984). May play a role in regulating the period length of BMAL1 transcriptional oscillation (PubMed:24321095).</text>
</comment>
<comment type="catalytic activity">
    <reaction evidence="4 7">
        <text>ATP-dependent breakage, passage and rejoining of double-stranded DNA.</text>
        <dbReference type="EC" id="5.6.2.2"/>
    </reaction>
</comment>
<comment type="cofactor">
    <cofactor evidence="4">
        <name>Mg(2+)</name>
        <dbReference type="ChEBI" id="CHEBI:18420"/>
    </cofactor>
    <cofactor evidence="4">
        <name>Mn(2+)</name>
        <dbReference type="ChEBI" id="CHEBI:29035"/>
    </cofactor>
    <cofactor evidence="4">
        <name>Ca(2+)</name>
        <dbReference type="ChEBI" id="CHEBI:29108"/>
    </cofactor>
    <text evidence="4">Binds two Mg(2+) per subunit. The magnesium ions form salt bridges with both the protein and the DNA. Can also accept other divalent metal cations, such as Mn(2+) or Ca(2+).</text>
</comment>
<comment type="subunit">
    <text evidence="2 3 9">Homodimer (By similarity). Interacts with COPS5 (By similarity). Interacts with RECQL5; this stimulates DNA decatenation (By similarity). Interacts with SETMAR; stimulates the topoisomerase activity (By similarity). Interacts with DHX9; this interaction occurs in a E2 enzyme UBE2I- and RNA-dependent manner, negatively regulates DHX9-mediated double-stranded DNA and RNA duplex helicase activity and stimulates TOP2A-mediated supercoiled DNA relaxation activity (By similarity). Interacts with HNRNPU (via C-terminus); this interaction protects the topoisomerase TOP2A from degradation and positively regulates the relaxation of supercoiled DNA in a RNA-dependent manner (By similarity). Interacts with MCM3AP (By similarity). Interacts with ERCC6 (By similarity). Interacts with PLSCR1 (By similarity). Interacts with GCNA; this interaction allows the resolution of topoisomerase II (TOP2A) DNA-protein cross-links (PubMed:31839538). Interacts with POL1RA/RPA1 (via dock II) and UBTF in the context of Pol I complex; may assist Pol I transcription initiation by releasing supercoils occurring during DNA unwinding. Interacts with TPRN; TPRN interacts with a number of DNA damage response proteins, is recruited to sites of DNA damage and may play a role in DNA damage repair (By similarity).</text>
</comment>
<comment type="interaction">
    <interactant intactId="EBI-642809">
        <id>Q01320</id>
    </interactant>
    <interactant intactId="EBI-1210244">
        <id>Q3TKT4</id>
        <label>Smarca4</label>
    </interactant>
    <organismsDiffer>false</organismsDiffer>
    <experiments>3</experiments>
</comment>
<comment type="subcellular location">
    <subcellularLocation>
        <location evidence="2">Cytoplasm</location>
    </subcellularLocation>
    <subcellularLocation>
        <location evidence="2">Nucleus</location>
        <location evidence="2">Nucleoplasm</location>
    </subcellularLocation>
    <subcellularLocation>
        <location evidence="2">Nucleus</location>
    </subcellularLocation>
    <subcellularLocation>
        <location evidence="2">Nucleus</location>
        <location evidence="2">Nucleolus</location>
    </subcellularLocation>
</comment>
<comment type="PTM">
    <text evidence="2">Phosphorylation has no effect on catalytic activity (By similarity). However, phosphorylation at Ser-1105 by CSNK1D/CK1 promotes DNA cleavable complex formation (By similarity).</text>
</comment>
<comment type="miscellaneous">
    <text>Eukaryotic topoisomerase I and II can relax both negative and positive supercoils, whereas prokaryotic enzymes relax only negative supercoils.</text>
</comment>
<comment type="similarity">
    <text evidence="10">Belongs to the type II topoisomerase family.</text>
</comment>
<name>TOP2A_MOUSE</name>
<gene>
    <name type="primary">Top2a</name>
    <name type="synonym">Top-2</name>
    <name type="synonym">Top2</name>
</gene>
<dbReference type="EC" id="5.6.2.2" evidence="4 7"/>
<dbReference type="EMBL" id="D12513">
    <property type="protein sequence ID" value="BAA02076.1"/>
    <property type="molecule type" value="mRNA"/>
</dbReference>
<dbReference type="EMBL" id="AL591067">
    <property type="status" value="NOT_ANNOTATED_CDS"/>
    <property type="molecule type" value="Genomic_DNA"/>
</dbReference>
<dbReference type="EMBL" id="U01915">
    <property type="protein sequence ID" value="AAC52135.1"/>
    <property type="molecule type" value="mRNA"/>
</dbReference>
<dbReference type="CCDS" id="CCDS25370.1"/>
<dbReference type="PIR" id="JS0703">
    <property type="entry name" value="JS0703"/>
</dbReference>
<dbReference type="RefSeq" id="NP_035753.2">
    <property type="nucleotide sequence ID" value="NM_011623.2"/>
</dbReference>
<dbReference type="RefSeq" id="XP_006533216.1">
    <property type="nucleotide sequence ID" value="XM_006533153.4"/>
</dbReference>
<dbReference type="SMR" id="Q01320"/>
<dbReference type="BioGRID" id="204276">
    <property type="interactions" value="29"/>
</dbReference>
<dbReference type="CORUM" id="Q01320"/>
<dbReference type="DIP" id="DIP-40621N"/>
<dbReference type="FunCoup" id="Q01320">
    <property type="interactions" value="1609"/>
</dbReference>
<dbReference type="IntAct" id="Q01320">
    <property type="interactions" value="22"/>
</dbReference>
<dbReference type="MINT" id="Q01320"/>
<dbReference type="STRING" id="10090.ENSMUSP00000068896"/>
<dbReference type="ChEMBL" id="CHEMBL3586"/>
<dbReference type="GlyGen" id="Q01320">
    <property type="glycosylation" value="3 sites, 1 N-linked glycan (1 site), 1 O-linked glycan (1 site)"/>
</dbReference>
<dbReference type="iPTMnet" id="Q01320"/>
<dbReference type="PhosphoSitePlus" id="Q01320"/>
<dbReference type="SwissPalm" id="Q01320"/>
<dbReference type="jPOST" id="Q01320"/>
<dbReference type="PaxDb" id="10090-ENSMUSP00000068896"/>
<dbReference type="PeptideAtlas" id="Q01320"/>
<dbReference type="ProteomicsDB" id="260721"/>
<dbReference type="Pumba" id="Q01320"/>
<dbReference type="Antibodypedia" id="1583">
    <property type="antibodies" value="1563 antibodies from 45 providers"/>
</dbReference>
<dbReference type="DNASU" id="21973"/>
<dbReference type="Ensembl" id="ENSMUST00000068031.8">
    <property type="protein sequence ID" value="ENSMUSP00000068896.8"/>
    <property type="gene ID" value="ENSMUSG00000020914.18"/>
</dbReference>
<dbReference type="GeneID" id="21973"/>
<dbReference type="KEGG" id="mmu:21973"/>
<dbReference type="UCSC" id="uc007lid.1">
    <property type="organism name" value="mouse"/>
</dbReference>
<dbReference type="AGR" id="MGI:98790"/>
<dbReference type="CTD" id="7153"/>
<dbReference type="MGI" id="MGI:98790">
    <property type="gene designation" value="Top2a"/>
</dbReference>
<dbReference type="VEuPathDB" id="HostDB:ENSMUSG00000020914"/>
<dbReference type="eggNOG" id="KOG0355">
    <property type="taxonomic scope" value="Eukaryota"/>
</dbReference>
<dbReference type="GeneTree" id="ENSGT00940000157539"/>
<dbReference type="HOGENOM" id="CLU_001935_1_0_1"/>
<dbReference type="InParanoid" id="Q01320"/>
<dbReference type="OMA" id="DVKPHMI"/>
<dbReference type="OrthoDB" id="276498at2759"/>
<dbReference type="PhylomeDB" id="Q01320"/>
<dbReference type="TreeFam" id="TF105282"/>
<dbReference type="BRENDA" id="5.99.1.3">
    <property type="organism ID" value="3474"/>
</dbReference>
<dbReference type="Reactome" id="R-MMU-4615885">
    <property type="pathway name" value="SUMOylation of DNA replication proteins"/>
</dbReference>
<dbReference type="BioGRID-ORCS" id="21973">
    <property type="hits" value="28 hits in 79 CRISPR screens"/>
</dbReference>
<dbReference type="ChiTaRS" id="Top2a">
    <property type="organism name" value="mouse"/>
</dbReference>
<dbReference type="PRO" id="PR:Q01320"/>
<dbReference type="Proteomes" id="UP000000589">
    <property type="component" value="Chromosome 11"/>
</dbReference>
<dbReference type="RNAct" id="Q01320">
    <property type="molecule type" value="protein"/>
</dbReference>
<dbReference type="Bgee" id="ENSMUSG00000020914">
    <property type="expression patterns" value="Expressed in undifferentiated genital tubercle and 227 other cell types or tissues"/>
</dbReference>
<dbReference type="GO" id="GO:0005814">
    <property type="term" value="C:centriole"/>
    <property type="evidence" value="ECO:0007669"/>
    <property type="project" value="Ensembl"/>
</dbReference>
<dbReference type="GO" id="GO:0000775">
    <property type="term" value="C:chromosome, centromeric region"/>
    <property type="evidence" value="ECO:0000314"/>
    <property type="project" value="MGI"/>
</dbReference>
<dbReference type="GO" id="GO:0000793">
    <property type="term" value="C:condensed chromosome"/>
    <property type="evidence" value="ECO:0000314"/>
    <property type="project" value="MGI"/>
</dbReference>
<dbReference type="GO" id="GO:0005737">
    <property type="term" value="C:cytoplasm"/>
    <property type="evidence" value="ECO:0000250"/>
    <property type="project" value="UniProtKB"/>
</dbReference>
<dbReference type="GO" id="GO:0009330">
    <property type="term" value="C:DNA topoisomerase type II (double strand cut, ATP-hydrolyzing) complex"/>
    <property type="evidence" value="ECO:0007669"/>
    <property type="project" value="Ensembl"/>
</dbReference>
<dbReference type="GO" id="GO:0001673">
    <property type="term" value="C:male germ cell nucleus"/>
    <property type="evidence" value="ECO:0000314"/>
    <property type="project" value="MGI"/>
</dbReference>
<dbReference type="GO" id="GO:0000228">
    <property type="term" value="C:nuclear chromosome"/>
    <property type="evidence" value="ECO:0007669"/>
    <property type="project" value="Ensembl"/>
</dbReference>
<dbReference type="GO" id="GO:0005730">
    <property type="term" value="C:nucleolus"/>
    <property type="evidence" value="ECO:0000314"/>
    <property type="project" value="MGI"/>
</dbReference>
<dbReference type="GO" id="GO:0005654">
    <property type="term" value="C:nucleoplasm"/>
    <property type="evidence" value="ECO:0000250"/>
    <property type="project" value="UniProtKB"/>
</dbReference>
<dbReference type="GO" id="GO:0005634">
    <property type="term" value="C:nucleus"/>
    <property type="evidence" value="ECO:0000314"/>
    <property type="project" value="MGI"/>
</dbReference>
<dbReference type="GO" id="GO:1990904">
    <property type="term" value="C:ribonucleoprotein complex"/>
    <property type="evidence" value="ECO:0000250"/>
    <property type="project" value="UniProtKB"/>
</dbReference>
<dbReference type="GO" id="GO:0005524">
    <property type="term" value="F:ATP binding"/>
    <property type="evidence" value="ECO:0007669"/>
    <property type="project" value="UniProtKB-KW"/>
</dbReference>
<dbReference type="GO" id="GO:0003682">
    <property type="term" value="F:chromatin binding"/>
    <property type="evidence" value="ECO:0007669"/>
    <property type="project" value="Ensembl"/>
</dbReference>
<dbReference type="GO" id="GO:0008301">
    <property type="term" value="F:DNA binding, bending"/>
    <property type="evidence" value="ECO:0000250"/>
    <property type="project" value="UniProtKB"/>
</dbReference>
<dbReference type="GO" id="GO:0003918">
    <property type="term" value="F:DNA topoisomerase type II (double strand cut, ATP-hydrolyzing) activity"/>
    <property type="evidence" value="ECO:0000314"/>
    <property type="project" value="MGI"/>
</dbReference>
<dbReference type="GO" id="GO:0000287">
    <property type="term" value="F:magnesium ion binding"/>
    <property type="evidence" value="ECO:0000250"/>
    <property type="project" value="UniProtKB"/>
</dbReference>
<dbReference type="GO" id="GO:0046982">
    <property type="term" value="F:protein heterodimerization activity"/>
    <property type="evidence" value="ECO:0007669"/>
    <property type="project" value="Ensembl"/>
</dbReference>
<dbReference type="GO" id="GO:0042803">
    <property type="term" value="F:protein homodimerization activity"/>
    <property type="evidence" value="ECO:0007669"/>
    <property type="project" value="Ensembl"/>
</dbReference>
<dbReference type="GO" id="GO:0005080">
    <property type="term" value="F:protein kinase C binding"/>
    <property type="evidence" value="ECO:0007669"/>
    <property type="project" value="Ensembl"/>
</dbReference>
<dbReference type="GO" id="GO:0043130">
    <property type="term" value="F:ubiquitin binding"/>
    <property type="evidence" value="ECO:0007669"/>
    <property type="project" value="Ensembl"/>
</dbReference>
<dbReference type="GO" id="GO:0030263">
    <property type="term" value="P:apoptotic chromosome condensation"/>
    <property type="evidence" value="ECO:0007669"/>
    <property type="project" value="Ensembl"/>
</dbReference>
<dbReference type="GO" id="GO:0006325">
    <property type="term" value="P:chromatin organization"/>
    <property type="evidence" value="ECO:0007669"/>
    <property type="project" value="Ensembl"/>
</dbReference>
<dbReference type="GO" id="GO:0030261">
    <property type="term" value="P:chromosome condensation"/>
    <property type="evidence" value="ECO:0000315"/>
    <property type="project" value="MGI"/>
</dbReference>
<dbReference type="GO" id="GO:0007059">
    <property type="term" value="P:chromosome segregation"/>
    <property type="evidence" value="ECO:0000314"/>
    <property type="project" value="MGI"/>
</dbReference>
<dbReference type="GO" id="GO:0006974">
    <property type="term" value="P:DNA damage response"/>
    <property type="evidence" value="ECO:0007669"/>
    <property type="project" value="Ensembl"/>
</dbReference>
<dbReference type="GO" id="GO:0006265">
    <property type="term" value="P:DNA topological change"/>
    <property type="evidence" value="ECO:0000314"/>
    <property type="project" value="MGI"/>
</dbReference>
<dbReference type="GO" id="GO:0040016">
    <property type="term" value="P:embryonic cleavage"/>
    <property type="evidence" value="ECO:0000315"/>
    <property type="project" value="MGI"/>
</dbReference>
<dbReference type="GO" id="GO:0051309">
    <property type="term" value="P:female meiosis chromosome separation"/>
    <property type="evidence" value="ECO:0000304"/>
    <property type="project" value="MGI"/>
</dbReference>
<dbReference type="GO" id="GO:0007143">
    <property type="term" value="P:female meiotic nuclear division"/>
    <property type="evidence" value="ECO:0000315"/>
    <property type="project" value="MGI"/>
</dbReference>
<dbReference type="GO" id="GO:0002244">
    <property type="term" value="P:hematopoietic progenitor cell differentiation"/>
    <property type="evidence" value="ECO:0000315"/>
    <property type="project" value="MGI"/>
</dbReference>
<dbReference type="GO" id="GO:0043065">
    <property type="term" value="P:positive regulation of apoptotic process"/>
    <property type="evidence" value="ECO:0007669"/>
    <property type="project" value="Ensembl"/>
</dbReference>
<dbReference type="GO" id="GO:0045870">
    <property type="term" value="P:positive regulation of single stranded viral RNA replication via double stranded DNA intermediate"/>
    <property type="evidence" value="ECO:0007669"/>
    <property type="project" value="Ensembl"/>
</dbReference>
<dbReference type="GO" id="GO:0045944">
    <property type="term" value="P:positive regulation of transcription by RNA polymerase II"/>
    <property type="evidence" value="ECO:0000315"/>
    <property type="project" value="MGI"/>
</dbReference>
<dbReference type="GO" id="GO:0042752">
    <property type="term" value="P:regulation of circadian rhythm"/>
    <property type="evidence" value="ECO:0000315"/>
    <property type="project" value="UniProtKB"/>
</dbReference>
<dbReference type="GO" id="GO:0048511">
    <property type="term" value="P:rhythmic process"/>
    <property type="evidence" value="ECO:0007669"/>
    <property type="project" value="UniProtKB-KW"/>
</dbReference>
<dbReference type="CDD" id="cd16930">
    <property type="entry name" value="HATPase_TopII-like"/>
    <property type="match status" value="1"/>
</dbReference>
<dbReference type="CDD" id="cd00187">
    <property type="entry name" value="TOP4c"/>
    <property type="match status" value="1"/>
</dbReference>
<dbReference type="CDD" id="cd03481">
    <property type="entry name" value="TopoIIA_Trans_ScTopoIIA"/>
    <property type="match status" value="1"/>
</dbReference>
<dbReference type="CDD" id="cd03365">
    <property type="entry name" value="TOPRIM_TopoIIA"/>
    <property type="match status" value="1"/>
</dbReference>
<dbReference type="FunFam" id="1.10.268.10:FF:000002">
    <property type="entry name" value="DNA topoisomerase 2"/>
    <property type="match status" value="1"/>
</dbReference>
<dbReference type="FunFam" id="3.30.1360.40:FF:000003">
    <property type="entry name" value="DNA topoisomerase 2"/>
    <property type="match status" value="1"/>
</dbReference>
<dbReference type="FunFam" id="3.30.1490.30:FF:000001">
    <property type="entry name" value="DNA topoisomerase 2"/>
    <property type="match status" value="1"/>
</dbReference>
<dbReference type="FunFam" id="3.30.230.10:FF:000008">
    <property type="entry name" value="DNA topoisomerase 2"/>
    <property type="match status" value="1"/>
</dbReference>
<dbReference type="FunFam" id="3.30.565.10:FF:000004">
    <property type="entry name" value="DNA topoisomerase 2"/>
    <property type="match status" value="1"/>
</dbReference>
<dbReference type="FunFam" id="3.40.50.670:FF:000001">
    <property type="entry name" value="DNA topoisomerase 2"/>
    <property type="match status" value="2"/>
</dbReference>
<dbReference type="FunFam" id="3.90.199.10:FF:000002">
    <property type="entry name" value="DNA topoisomerase 2"/>
    <property type="match status" value="1"/>
</dbReference>
<dbReference type="Gene3D" id="3.30.1360.40">
    <property type="match status" value="1"/>
</dbReference>
<dbReference type="Gene3D" id="3.30.1490.30">
    <property type="match status" value="1"/>
</dbReference>
<dbReference type="Gene3D" id="3.30.230.10">
    <property type="match status" value="1"/>
</dbReference>
<dbReference type="Gene3D" id="3.40.50.670">
    <property type="match status" value="1"/>
</dbReference>
<dbReference type="Gene3D" id="3.30.565.10">
    <property type="entry name" value="Histidine kinase-like ATPase, C-terminal domain"/>
    <property type="match status" value="1"/>
</dbReference>
<dbReference type="Gene3D" id="3.90.199.10">
    <property type="entry name" value="Topoisomerase II, domain 5"/>
    <property type="match status" value="1"/>
</dbReference>
<dbReference type="Gene3D" id="1.10.268.10">
    <property type="entry name" value="Topoisomerase, domain 3"/>
    <property type="match status" value="1"/>
</dbReference>
<dbReference type="InterPro" id="IPR050634">
    <property type="entry name" value="DNA_Topoisomerase_II"/>
</dbReference>
<dbReference type="InterPro" id="IPR012542">
    <property type="entry name" value="DTHCT"/>
</dbReference>
<dbReference type="InterPro" id="IPR036890">
    <property type="entry name" value="HATPase_C_sf"/>
</dbReference>
<dbReference type="InterPro" id="IPR020568">
    <property type="entry name" value="Ribosomal_Su5_D2-typ_SF"/>
</dbReference>
<dbReference type="InterPro" id="IPR014721">
    <property type="entry name" value="Ribsml_uS5_D2-typ_fold_subgr"/>
</dbReference>
<dbReference type="InterPro" id="IPR001241">
    <property type="entry name" value="Topo_IIA"/>
</dbReference>
<dbReference type="InterPro" id="IPR013760">
    <property type="entry name" value="Topo_IIA-like_dom_sf"/>
</dbReference>
<dbReference type="InterPro" id="IPR013758">
    <property type="entry name" value="Topo_IIA_A/C_ab"/>
</dbReference>
<dbReference type="InterPro" id="IPR013757">
    <property type="entry name" value="Topo_IIA_A_a_sf"/>
</dbReference>
<dbReference type="InterPro" id="IPR013759">
    <property type="entry name" value="Topo_IIA_B_C"/>
</dbReference>
<dbReference type="InterPro" id="IPR013506">
    <property type="entry name" value="Topo_IIA_bsu_dom2"/>
</dbReference>
<dbReference type="InterPro" id="IPR002205">
    <property type="entry name" value="Topo_IIA_dom_A"/>
</dbReference>
<dbReference type="InterPro" id="IPR001154">
    <property type="entry name" value="TopoII_euk"/>
</dbReference>
<dbReference type="InterPro" id="IPR018522">
    <property type="entry name" value="TopoIIA_CS"/>
</dbReference>
<dbReference type="InterPro" id="IPR031660">
    <property type="entry name" value="TOPRIM_C"/>
</dbReference>
<dbReference type="InterPro" id="IPR006171">
    <property type="entry name" value="TOPRIM_dom"/>
</dbReference>
<dbReference type="InterPro" id="IPR034157">
    <property type="entry name" value="TOPRIM_TopoII"/>
</dbReference>
<dbReference type="PANTHER" id="PTHR10169:SF61">
    <property type="entry name" value="DNA TOPOISOMERASE 2-ALPHA"/>
    <property type="match status" value="1"/>
</dbReference>
<dbReference type="PANTHER" id="PTHR10169">
    <property type="entry name" value="DNA TOPOISOMERASE/GYRASE"/>
    <property type="match status" value="1"/>
</dbReference>
<dbReference type="Pfam" id="PF00204">
    <property type="entry name" value="DNA_gyraseB"/>
    <property type="match status" value="1"/>
</dbReference>
<dbReference type="Pfam" id="PF00521">
    <property type="entry name" value="DNA_topoisoIV"/>
    <property type="match status" value="1"/>
</dbReference>
<dbReference type="Pfam" id="PF08070">
    <property type="entry name" value="DTHCT"/>
    <property type="match status" value="1"/>
</dbReference>
<dbReference type="Pfam" id="PF02518">
    <property type="entry name" value="HATPase_c"/>
    <property type="match status" value="1"/>
</dbReference>
<dbReference type="Pfam" id="PF01751">
    <property type="entry name" value="Toprim"/>
    <property type="match status" value="1"/>
</dbReference>
<dbReference type="Pfam" id="PF16898">
    <property type="entry name" value="TOPRIM_C"/>
    <property type="match status" value="1"/>
</dbReference>
<dbReference type="PRINTS" id="PR01158">
    <property type="entry name" value="TOPISMRASEII"/>
</dbReference>
<dbReference type="PRINTS" id="PR00418">
    <property type="entry name" value="TPI2FAMILY"/>
</dbReference>
<dbReference type="SMART" id="SM00433">
    <property type="entry name" value="TOP2c"/>
    <property type="match status" value="1"/>
</dbReference>
<dbReference type="SMART" id="SM00434">
    <property type="entry name" value="TOP4c"/>
    <property type="match status" value="1"/>
</dbReference>
<dbReference type="SUPFAM" id="SSF55874">
    <property type="entry name" value="ATPase domain of HSP90 chaperone/DNA topoisomerase II/histidine kinase"/>
    <property type="match status" value="1"/>
</dbReference>
<dbReference type="SUPFAM" id="SSF54211">
    <property type="entry name" value="Ribosomal protein S5 domain 2-like"/>
    <property type="match status" value="1"/>
</dbReference>
<dbReference type="SUPFAM" id="SSF56719">
    <property type="entry name" value="Type II DNA topoisomerase"/>
    <property type="match status" value="1"/>
</dbReference>
<dbReference type="PROSITE" id="PS52040">
    <property type="entry name" value="TOPO_IIA"/>
    <property type="match status" value="1"/>
</dbReference>
<dbReference type="PROSITE" id="PS00177">
    <property type="entry name" value="TOPOISOMERASE_II"/>
    <property type="match status" value="1"/>
</dbReference>
<dbReference type="PROSITE" id="PS50880">
    <property type="entry name" value="TOPRIM"/>
    <property type="match status" value="1"/>
</dbReference>
<keyword id="KW-0007">Acetylation</keyword>
<keyword id="KW-0067">ATP-binding</keyword>
<keyword id="KW-0090">Biological rhythms</keyword>
<keyword id="KW-0963">Cytoplasm</keyword>
<keyword id="KW-0238">DNA-binding</keyword>
<keyword id="KW-0413">Isomerase</keyword>
<keyword id="KW-1017">Isopeptide bond</keyword>
<keyword id="KW-0460">Magnesium</keyword>
<keyword id="KW-0479">Metal-binding</keyword>
<keyword id="KW-0547">Nucleotide-binding</keyword>
<keyword id="KW-0539">Nucleus</keyword>
<keyword id="KW-0597">Phosphoprotein</keyword>
<keyword id="KW-1185">Reference proteome</keyword>
<keyword id="KW-0799">Topoisomerase</keyword>
<keyword id="KW-0832">Ubl conjugation</keyword>
<protein>
    <recommendedName>
        <fullName>DNA topoisomerase 2-alpha</fullName>
        <ecNumber evidence="4 7">5.6.2.2</ecNumber>
    </recommendedName>
    <alternativeName>
        <fullName>DNA topoisomerase II, alpha isozyme</fullName>
    </alternativeName>
</protein>
<proteinExistence type="evidence at protein level"/>
<accession>Q01320</accession>
<accession>E9PX08</accession>
<reference key="1">
    <citation type="journal article" date="1992" name="Nucleic Acids Res.">
        <title>Characterization of cDNA encoding the mouse DNA topoisomerase II that can complement the budding yeast top2 mutation.</title>
        <authorList>
            <person name="Adachi N."/>
            <person name="Miyaike M."/>
            <person name="Ikeda H."/>
            <person name="Kikuchi A."/>
        </authorList>
    </citation>
    <scope>NUCLEOTIDE SEQUENCE [MRNA]</scope>
    <scope>CATALYTIC ACTIVITY</scope>
    <scope>FUNCTION</scope>
</reference>
<reference key="2">
    <citation type="journal article" date="2009" name="PLoS Biol.">
        <title>Lineage-specific biology revealed by a finished genome assembly of the mouse.</title>
        <authorList>
            <person name="Church D.M."/>
            <person name="Goodstadt L."/>
            <person name="Hillier L.W."/>
            <person name="Zody M.C."/>
            <person name="Goldstein S."/>
            <person name="She X."/>
            <person name="Bult C.J."/>
            <person name="Agarwala R."/>
            <person name="Cherry J.L."/>
            <person name="DiCuccio M."/>
            <person name="Hlavina W."/>
            <person name="Kapustin Y."/>
            <person name="Meric P."/>
            <person name="Maglott D."/>
            <person name="Birtle Z."/>
            <person name="Marques A.C."/>
            <person name="Graves T."/>
            <person name="Zhou S."/>
            <person name="Teague B."/>
            <person name="Potamousis K."/>
            <person name="Churas C."/>
            <person name="Place M."/>
            <person name="Herschleb J."/>
            <person name="Runnheim R."/>
            <person name="Forrest D."/>
            <person name="Amos-Landgraf J."/>
            <person name="Schwartz D.C."/>
            <person name="Cheng Z."/>
            <person name="Lindblad-Toh K."/>
            <person name="Eichler E.E."/>
            <person name="Ponting C.P."/>
        </authorList>
    </citation>
    <scope>NUCLEOTIDE SEQUENCE [LARGE SCALE GENOMIC DNA]</scope>
    <source>
        <strain>C57BL/6J</strain>
    </source>
</reference>
<reference key="3">
    <citation type="journal article" date="1993" name="Cancer Res.">
        <title>Characterization of a DNA topoisomerase IIalpha gene rearrangement in adriamycin-resistant P388 leukemia: expression of a fusion messenger RNA transcript encoding topoisomerase IIalpha and the retinoic acid receptor alpha locus.</title>
        <authorList>
            <person name="McPherson J."/>
            <person name="Brown G.A."/>
            <person name="Goldenberg G.J."/>
        </authorList>
    </citation>
    <scope>NUCLEOTIDE SEQUENCE [MRNA] OF 1254-1528</scope>
    <source>
        <tissue>Lymphoma</tissue>
    </source>
</reference>
<reference key="4">
    <citation type="journal article" date="2010" name="Cell">
        <title>A tissue-specific atlas of mouse protein phosphorylation and expression.</title>
        <authorList>
            <person name="Huttlin E.L."/>
            <person name="Jedrychowski M.P."/>
            <person name="Elias J.E."/>
            <person name="Goswami T."/>
            <person name="Rad R."/>
            <person name="Beausoleil S.A."/>
            <person name="Villen J."/>
            <person name="Haas W."/>
            <person name="Sowa M.E."/>
            <person name="Gygi S.P."/>
        </authorList>
    </citation>
    <scope>PHOSPHORYLATION [LARGE SCALE ANALYSIS] AT SER-1211; THR-1245; THR-1323; SER-1328; SER-1333; THR-1350; SER-1373; SER-1388 AND SER-1521</scope>
    <scope>IDENTIFICATION BY MASS SPECTROMETRY [LARGE SCALE ANALYSIS]</scope>
    <source>
        <tissue>Liver</tissue>
        <tissue>Lung</tissue>
        <tissue>Spleen</tissue>
        <tissue>Testis</tissue>
    </source>
</reference>
<reference key="5">
    <citation type="journal article" date="2013" name="Mol. Cell">
        <title>SIRT5-mediated lysine desuccinylation impacts diverse metabolic pathways.</title>
        <authorList>
            <person name="Park J."/>
            <person name="Chen Y."/>
            <person name="Tishkoff D.X."/>
            <person name="Peng C."/>
            <person name="Tan M."/>
            <person name="Dai L."/>
            <person name="Xie Z."/>
            <person name="Zhang Y."/>
            <person name="Zwaans B.M."/>
            <person name="Skinner M.E."/>
            <person name="Lombard D.B."/>
            <person name="Zhao Y."/>
        </authorList>
    </citation>
    <scope>ACETYLATION [LARGE SCALE ANALYSIS] AT LYS-1418 AND LYS-1438</scope>
    <scope>IDENTIFICATION BY MASS SPECTROMETRY [LARGE SCALE ANALYSIS]</scope>
    <source>
        <tissue>Embryonic fibroblast</tissue>
    </source>
</reference>
<reference key="6">
    <citation type="journal article" date="2014" name="Biochem. Biophys. Res. Commun.">
        <title>Shikonin shortens the circadian period: possible involvement of Top2 inhibition.</title>
        <authorList>
            <person name="Ogawa Y."/>
            <person name="Kawano Y."/>
            <person name="Yamazaki Y."/>
            <person name="Onishi Y."/>
        </authorList>
    </citation>
    <scope>FUNCTION</scope>
</reference>
<reference key="7">
    <citation type="journal article" date="2020" name="Dev. Cell">
        <title>GCNA Interacts with Spartan and Topoisomerase II to Regulate Genome Stability.</title>
        <authorList>
            <person name="Dokshin G.A."/>
            <person name="Davis G.M."/>
            <person name="Sawle A.D."/>
            <person name="Eldridge M.D."/>
            <person name="Nicholls P.K."/>
            <person name="Gourley T.E."/>
            <person name="Romer K.A."/>
            <person name="Molesworth L.W."/>
            <person name="Tatnell H.R."/>
            <person name="Ozturk A.R."/>
            <person name="de Rooij D.G."/>
            <person name="Hannon G.J."/>
            <person name="Page D.C."/>
            <person name="Mello C.C."/>
            <person name="Carmell M.A."/>
        </authorList>
    </citation>
    <scope>INTERACTION WITH GCNA</scope>
</reference>
<sequence>MELSPLQPVNENMLMNKKKNEDGKKRLSIERIYQKKTQLEHILLRPDTYIGSVELVTQQMWVYDEDVGINYREVTFVPGLYKIFDEILVNAADNKQRDPKMSCIRVTIDPENNVISIWNNGKGIPVVEHKVEKIYVPALIFGQLLTSSNYDDDEKKVTGGRNGYGAKLCNIFSTKFTVETASREYKKMFKQTWMDNMGRAGDMELKPFSGEDYTCITFQPDLSKFKMQSLDKDIVALMVRRAYDIAGSTKDVKVFLNGNSLPVKGFRSYVDLYLKDKVDETGNSLKVIHEQVNPRWEVCLTMSERGFQQISFVNSIATSKGGRHVDYVADQIVSKLVDVVKKKNKGGVAVKAHQVKNHMWIFVNALIENPTFDSQTKENMTLQAKSFGSTCQLSEKFIKAAIGCGIVESILNWVKFKAQIQLNKKCSAVKHTKIKGIPKLDDANDAGSRNSTECTLILTEGDSAKTLAVSGLGVVGRDKYGVFPLRGKILNVREASHKQIMENAEINNIIKIVGLQYKKNYEDEDSLKTLRYGKIMIMTDQDQDGSHIKGLLINFIHHNWPSLLRHRFLEEFITPIVKVSKNKQEIAFYSLPEFEEWKSSTPNHKKWKVKYYKGLGTSTSKEAKEYFADMKRHRIQFKYSGPEDDAAISLAFSKKQVDDRKEWLTNFMEDRRQRKLLGLPEDYLYGQSTSYLTYNDFINKELILFSNSDNERSIPSMVDGLKPGQRKVLFTCFKRNDKREVKVAQLAGSVAEMSSYHHGEMSLMMTIINLAQNFVGSNNLNLLQPIGQFGTRLHGGKDSASPRYIFTMLSPLARLLFPPKDDHTLRFLYDDNQRVEPEWYIPIIPMVLINGAEGIGTGWSCKIPNFDVREVVNNIRRLLDGEEPLPMLPSYKNFKGTIEELASNQYVINGEVAILDSTTIEISELPIRTWTQTYKEQVLEPMLNGTEKTPSLITDYREYHTDTTVKFVIKMTEEKLAEAERVGLHKVFKLQSSLTCNSMVLFDHVGCLKKYDTVLDILRDFFELRLKYYGLRKEWLLGMLGAESSKLNNQARFILEKIDGKIVIENKPKKELIKVLIQRGYDSDPVKAWKEAQQKVPDEEENEESDTETSTSDSAAEAGPTFNYLLDMPLWYLTKEKKDELCKQRNEKEQELNTLKQKSPSDLWKEDLAVFIEELEVVEAKEKQDEQVGLPGKAGKAKGKKAQMCADVLPSPRGKRVIPQVTVEMKAEAEKKIRKKIKSENVEGTPAEDGAEPGSLRQRIEKKQKKEPGAKKQTTLPFKPVKKGRKKNPWSDSESDVSSNESNVDVPPRQKEQRSAAAKAKFTVDLDSDEDFSGLDEKDEDEDFLPLDATPPKAKIPPKNTKKALKTQGSSMSVVDLESDVKDSVPASPGVPAADFPAETEQSKPSKKTVGVKKTATKSQSSVSTAGTKKRAAPKGTKSDSALSARVSEKPAPAKAKNSRKRKPSSSDSSDSDFERAISKGATSKKAKGEEQDFPVDLEDTIAPRAKSDRARKPIKYLEESDDDDDLF</sequence>
<evidence type="ECO:0000250" key="1">
    <source>
        <dbReference type="UniProtKB" id="P06786"/>
    </source>
</evidence>
<evidence type="ECO:0000250" key="2">
    <source>
        <dbReference type="UniProtKB" id="P11388"/>
    </source>
</evidence>
<evidence type="ECO:0000250" key="3">
    <source>
        <dbReference type="UniProtKB" id="P41516"/>
    </source>
</evidence>
<evidence type="ECO:0000255" key="4">
    <source>
        <dbReference type="PROSITE-ProRule" id="PRU00995"/>
    </source>
</evidence>
<evidence type="ECO:0000255" key="5">
    <source>
        <dbReference type="PROSITE-ProRule" id="PRU01384"/>
    </source>
</evidence>
<evidence type="ECO:0000256" key="6">
    <source>
        <dbReference type="SAM" id="MobiDB-lite"/>
    </source>
</evidence>
<evidence type="ECO:0000269" key="7">
    <source>
    </source>
</evidence>
<evidence type="ECO:0000269" key="8">
    <source>
    </source>
</evidence>
<evidence type="ECO:0000269" key="9">
    <source>
    </source>
</evidence>
<evidence type="ECO:0000305" key="10"/>
<evidence type="ECO:0007744" key="11">
    <source>
    </source>
</evidence>
<evidence type="ECO:0007744" key="12">
    <source>
    </source>
</evidence>
<feature type="chain" id="PRO_0000145364" description="DNA topoisomerase 2-alpha">
    <location>
        <begin position="1"/>
        <end position="1528"/>
    </location>
</feature>
<feature type="domain" description="Toprim" evidence="4">
    <location>
        <begin position="454"/>
        <end position="571"/>
    </location>
</feature>
<feature type="domain" description="Topo IIA-type catalytic" evidence="5">
    <location>
        <begin position="714"/>
        <end position="1168"/>
    </location>
</feature>
<feature type="region of interest" description="Interaction with DNA" evidence="2">
    <location>
        <begin position="341"/>
        <end position="343"/>
    </location>
</feature>
<feature type="region of interest" description="Interaction with DNA" evidence="2">
    <location>
        <begin position="989"/>
        <end position="998"/>
    </location>
</feature>
<feature type="region of interest" description="Disordered" evidence="6">
    <location>
        <begin position="1090"/>
        <end position="1118"/>
    </location>
</feature>
<feature type="region of interest" description="Disordered" evidence="6">
    <location>
        <begin position="1183"/>
        <end position="1211"/>
    </location>
</feature>
<feature type="region of interest" description="Disordered" evidence="6">
    <location>
        <begin position="1229"/>
        <end position="1528"/>
    </location>
</feature>
<feature type="region of interest" description="Interaction with PLSCR1" evidence="2">
    <location>
        <begin position="1429"/>
        <end position="1435"/>
    </location>
</feature>
<feature type="compositionally biased region" description="Acidic residues" evidence="6">
    <location>
        <begin position="1098"/>
        <end position="1107"/>
    </location>
</feature>
<feature type="compositionally biased region" description="Low complexity" evidence="6">
    <location>
        <begin position="1108"/>
        <end position="1118"/>
    </location>
</feature>
<feature type="compositionally biased region" description="Basic and acidic residues" evidence="6">
    <location>
        <begin position="1258"/>
        <end position="1270"/>
    </location>
</feature>
<feature type="compositionally biased region" description="Low complexity" evidence="6">
    <location>
        <begin position="1296"/>
        <end position="1306"/>
    </location>
</feature>
<feature type="compositionally biased region" description="Acidic residues" evidence="6">
    <location>
        <begin position="1326"/>
        <end position="1345"/>
    </location>
</feature>
<feature type="compositionally biased region" description="Basic and acidic residues" evidence="6">
    <location>
        <begin position="1506"/>
        <end position="1519"/>
    </location>
</feature>
<feature type="active site" description="O-(5'-phospho-DNA)-tyrosine intermediate" evidence="5">
    <location>
        <position position="804"/>
    </location>
</feature>
<feature type="binding site" evidence="2">
    <location>
        <position position="90"/>
    </location>
    <ligand>
        <name>ATP</name>
        <dbReference type="ChEBI" id="CHEBI:30616"/>
    </ligand>
</feature>
<feature type="binding site" evidence="2">
    <location>
        <position position="119"/>
    </location>
    <ligand>
        <name>ATP</name>
        <dbReference type="ChEBI" id="CHEBI:30616"/>
    </ligand>
</feature>
<feature type="binding site" evidence="2">
    <location>
        <begin position="147"/>
        <end position="149"/>
    </location>
    <ligand>
        <name>ATP</name>
        <dbReference type="ChEBI" id="CHEBI:30616"/>
    </ligand>
</feature>
<feature type="binding site" evidence="2">
    <location>
        <begin position="160"/>
        <end position="167"/>
    </location>
    <ligand>
        <name>ATP</name>
        <dbReference type="ChEBI" id="CHEBI:30616"/>
    </ligand>
</feature>
<feature type="binding site" evidence="2">
    <location>
        <begin position="375"/>
        <end position="377"/>
    </location>
    <ligand>
        <name>ATP</name>
        <dbReference type="ChEBI" id="CHEBI:30616"/>
    </ligand>
</feature>
<feature type="binding site" evidence="4">
    <location>
        <position position="460"/>
    </location>
    <ligand>
        <name>Mg(2+)</name>
        <dbReference type="ChEBI" id="CHEBI:18420"/>
        <label>1</label>
        <note>catalytic</note>
    </ligand>
</feature>
<feature type="binding site" evidence="4">
    <location>
        <position position="540"/>
    </location>
    <ligand>
        <name>Mg(2+)</name>
        <dbReference type="ChEBI" id="CHEBI:18420"/>
        <label>1</label>
        <note>catalytic</note>
    </ligand>
</feature>
<feature type="binding site" evidence="4">
    <location>
        <position position="540"/>
    </location>
    <ligand>
        <name>Mg(2+)</name>
        <dbReference type="ChEBI" id="CHEBI:18420"/>
        <label>2</label>
    </ligand>
</feature>
<feature type="binding site" evidence="4">
    <location>
        <position position="542"/>
    </location>
    <ligand>
        <name>Mg(2+)</name>
        <dbReference type="ChEBI" id="CHEBI:18420"/>
        <label>2</label>
    </ligand>
</feature>
<feature type="site" description="Interaction with DNA" evidence="4">
    <location>
        <position position="488"/>
    </location>
</feature>
<feature type="site" description="Interaction with DNA" evidence="4">
    <location>
        <position position="491"/>
    </location>
</feature>
<feature type="site" description="Interaction with DNA" evidence="4">
    <location>
        <position position="660"/>
    </location>
</feature>
<feature type="site" description="Interaction with DNA" evidence="4">
    <location>
        <position position="661"/>
    </location>
</feature>
<feature type="site" description="Interaction with DNA" evidence="4">
    <location>
        <position position="722"/>
    </location>
</feature>
<feature type="site" description="Interaction with DNA" evidence="4">
    <location>
        <position position="756"/>
    </location>
</feature>
<feature type="site" description="Interaction with DNA" evidence="4">
    <location>
        <position position="762"/>
    </location>
</feature>
<feature type="site" description="Transition state stabilizer" evidence="1">
    <location>
        <position position="803"/>
    </location>
</feature>
<feature type="site" description="Important for DNA bending; intercalates between base pairs of target DNA" evidence="1">
    <location>
        <position position="855"/>
    </location>
</feature>
<feature type="site" description="Interaction with DNA" evidence="4">
    <location>
        <position position="930"/>
    </location>
</feature>
<feature type="modified residue" description="N-acetylmethionine" evidence="2">
    <location>
        <position position="1"/>
    </location>
</feature>
<feature type="modified residue" description="Phosphoserine" evidence="2">
    <location>
        <position position="4"/>
    </location>
</feature>
<feature type="modified residue" description="Phosphothreonine" evidence="2">
    <location>
        <position position="281"/>
    </location>
</feature>
<feature type="modified residue" description="Phosphoserine; by CK1" evidence="2">
    <location>
        <position position="1105"/>
    </location>
</feature>
<feature type="modified residue" description="Phosphoserine" evidence="11">
    <location>
        <position position="1211"/>
    </location>
</feature>
<feature type="modified residue" description="Phosphothreonine" evidence="11">
    <location>
        <position position="1245"/>
    </location>
</feature>
<feature type="modified residue" description="Phosphoserine" evidence="2">
    <location>
        <position position="1291"/>
    </location>
</feature>
<feature type="modified residue" description="Phosphoserine" evidence="2">
    <location>
        <position position="1293"/>
    </location>
</feature>
<feature type="modified residue" description="Phosphoserine" evidence="2">
    <location>
        <position position="1295"/>
    </location>
</feature>
<feature type="modified residue" description="Phosphoserine" evidence="2">
    <location>
        <position position="1298"/>
    </location>
</feature>
<feature type="modified residue" description="Phosphothreonine" evidence="11">
    <location>
        <position position="1323"/>
    </location>
</feature>
<feature type="modified residue" description="Phosphoserine" evidence="11">
    <location>
        <position position="1328"/>
    </location>
</feature>
<feature type="modified residue" description="Phosphoserine" evidence="11">
    <location>
        <position position="1333"/>
    </location>
</feature>
<feature type="modified residue" description="Phosphothreonine" evidence="11">
    <location>
        <position position="1350"/>
    </location>
</feature>
<feature type="modified residue" description="Phosphoserine" evidence="2">
    <location>
        <position position="1370"/>
    </location>
</feature>
<feature type="modified residue" description="Phosphoserine" evidence="11">
    <location>
        <position position="1373"/>
    </location>
</feature>
<feature type="modified residue" description="Phosphoserine" evidence="2">
    <location>
        <position position="1384"/>
    </location>
</feature>
<feature type="modified residue" description="Phosphoserine" evidence="11">
    <location>
        <position position="1388"/>
    </location>
</feature>
<feature type="modified residue" description="N6-acetyllysine; alternate" evidence="12">
    <location>
        <position position="1418"/>
    </location>
</feature>
<feature type="modified residue" description="N6-acetyllysine; alternate" evidence="12">
    <location>
        <position position="1438"/>
    </location>
</feature>
<feature type="modified residue" description="Phosphoserine" evidence="2">
    <location>
        <position position="1465"/>
    </location>
</feature>
<feature type="modified residue" description="Phosphoserine" evidence="2">
    <location>
        <position position="1467"/>
    </location>
</feature>
<feature type="modified residue" description="Phosphoserine" evidence="2">
    <location>
        <position position="1470"/>
    </location>
</feature>
<feature type="modified residue" description="Phosphoserine" evidence="2">
    <location>
        <position position="1472"/>
    </location>
</feature>
<feature type="modified residue" description="Phosphoserine" evidence="11">
    <location>
        <position position="1521"/>
    </location>
</feature>
<feature type="cross-link" description="Glycyl lysine isopeptide (Lys-Gly) (interchain with G-Cter in SUMO2)" evidence="2">
    <location>
        <position position="17"/>
    </location>
</feature>
<feature type="cross-link" description="Glycyl lysine isopeptide (Lys-Gly) (interchain with G-Cter in SUMO2)" evidence="2">
    <location>
        <position position="155"/>
    </location>
</feature>
<feature type="cross-link" description="Glycyl lysine isopeptide (Lys-Gly) (interchain with G-Cter in SUMO2)" evidence="2">
    <location>
        <position position="156"/>
    </location>
</feature>
<feature type="cross-link" description="Glycyl lysine isopeptide (Lys-Gly) (interchain with G-Cter in SUMO2)" evidence="2">
    <location>
        <position position="351"/>
    </location>
</feature>
<feature type="cross-link" description="Glycyl lysine isopeptide (Lys-Gly) (interchain with G-Cter in SUMO2)" evidence="2">
    <location>
        <position position="385"/>
    </location>
</feature>
<feature type="cross-link" description="Glycyl lysine isopeptide (Lys-Gly) (interchain with G-Cter in SUMO2)" evidence="2">
    <location>
        <position position="396"/>
    </location>
</feature>
<feature type="cross-link" description="Glycyl lysine isopeptide (Lys-Gly) (interchain with G-Cter in SUMO2)" evidence="2">
    <location>
        <position position="415"/>
    </location>
</feature>
<feature type="cross-link" description="Glycyl lysine isopeptide (Lys-Gly) (interchain with G-Cter in SUMO2)" evidence="2">
    <location>
        <position position="417"/>
    </location>
</feature>
<feature type="cross-link" description="Glycyl lysine isopeptide (Lys-Gly) (interchain with G-Cter in SUMO2)" evidence="2">
    <location>
        <position position="424"/>
    </location>
</feature>
<feature type="cross-link" description="Glycyl lysine isopeptide (Lys-Gly) (interchain with G-Cter in SUMO2)" evidence="2">
    <location>
        <position position="439"/>
    </location>
</feature>
<feature type="cross-link" description="Glycyl lysine isopeptide (Lys-Gly) (interchain with G-Cter in SUMO2)" evidence="2">
    <location>
        <position position="465"/>
    </location>
</feature>
<feature type="cross-link" description="Glycyl lysine isopeptide (Lys-Gly) (interchain with G-Cter in SUMO2)" evidence="2">
    <location>
        <position position="479"/>
    </location>
</feature>
<feature type="cross-link" description="Glycyl lysine isopeptide (Lys-Gly) (interchain with G-Cter in SUMO2)" evidence="2">
    <location>
        <position position="528"/>
    </location>
</feature>
<feature type="cross-link" description="Glycyl lysine isopeptide (Lys-Gly) (interchain with G-Cter in SUMO2)" evidence="2">
    <location>
        <position position="583"/>
    </location>
</feature>
<feature type="cross-link" description="Glycyl lysine isopeptide (Lys-Gly) (interchain with G-Cter in SUMO2)" evidence="2">
    <location>
        <position position="598"/>
    </location>
</feature>
<feature type="cross-link" description="Glycyl lysine isopeptide (Lys-Gly) (interchain with G-Cter in SUMO2)" evidence="2">
    <location>
        <position position="613"/>
    </location>
</feature>
<feature type="cross-link" description="Glycyl lysine isopeptide (Lys-Gly) (interchain with G-Cter in SUMO2)" evidence="2">
    <location>
        <position position="621"/>
    </location>
</feature>
<feature type="cross-link" description="Glycyl lysine isopeptide (Lys-Gly) (interchain with G-Cter in SUMO2)" evidence="2">
    <location>
        <position position="624"/>
    </location>
</feature>
<feature type="cross-link" description="Glycyl lysine isopeptide (Lys-Gly) (interchain with G-Cter in SUMO2)" evidence="2">
    <location>
        <position position="631"/>
    </location>
</feature>
<feature type="cross-link" description="Glycyl lysine isopeptide (Lys-Gly) (interchain with G-Cter in SUMO2)" evidence="2">
    <location>
        <position position="638"/>
    </location>
</feature>
<feature type="cross-link" description="Glycyl lysine isopeptide (Lys-Gly) (interchain with G-Cter in SUMO2)" evidence="2">
    <location>
        <position position="654"/>
    </location>
</feature>
<feature type="cross-link" description="Glycyl lysine isopeptide (Lys-Gly) (interchain with G-Cter in SUMO2)" evidence="2">
    <location>
        <position position="661"/>
    </location>
</feature>
<feature type="cross-link" description="Glycyl lysine isopeptide (Lys-Gly) (interchain with G-Cter in SUMO2)" evidence="2">
    <location>
        <position position="675"/>
    </location>
</feature>
<feature type="cross-link" description="Glycyl lysine isopeptide (Lys-Gly) (interchain with G-Cter in SUMO2)" evidence="2">
    <location>
        <position position="1074"/>
    </location>
</feature>
<feature type="cross-link" description="Glycyl lysine isopeptide (Lys-Gly) (interchain with G-Cter in SUMO2)" evidence="2">
    <location>
        <position position="1193"/>
    </location>
</feature>
<feature type="cross-link" description="Glycyl lysine isopeptide (Lys-Gly) (interchain with G-Cter in SUMO2)" evidence="2">
    <location>
        <position position="1201"/>
    </location>
</feature>
<feature type="cross-link" description="Glycyl lysine isopeptide (Lys-Gly) (interchain with G-Cter in SUMO2)" evidence="2">
    <location>
        <position position="1226"/>
    </location>
</feature>
<feature type="cross-link" description="Glycyl lysine isopeptide (Lys-Gly) (interchain with G-Cter in SUMO1); alternate" evidence="2">
    <location>
        <position position="1238"/>
    </location>
</feature>
<feature type="cross-link" description="Glycyl lysine isopeptide (Lys-Gly) (interchain with G-Cter in SUMO2); alternate" evidence="2">
    <location>
        <position position="1238"/>
    </location>
</feature>
<feature type="cross-link" description="Glycyl lysine isopeptide (Lys-Gly) (interchain with G-Cter in SUMO2)" evidence="2">
    <location>
        <position position="1272"/>
    </location>
</feature>
<feature type="cross-link" description="Glycyl lysine isopeptide (Lys-Gly) (interchain with G-Cter in SUMO2)" evidence="2">
    <location>
        <position position="1279"/>
    </location>
</feature>
<feature type="cross-link" description="Glycyl lysine isopeptide (Lys-Gly) (interchain with G-Cter in SUMO2)" evidence="2">
    <location>
        <position position="1282"/>
    </location>
</feature>
<feature type="cross-link" description="Glycyl lysine isopeptide (Lys-Gly) (interchain with G-Cter in SUMO2)" evidence="2">
    <location>
        <position position="1359"/>
    </location>
</feature>
<feature type="cross-link" description="Glycyl lysine isopeptide (Lys-Gly) (interchain with G-Cter in SUMO2)" evidence="2">
    <location>
        <position position="1363"/>
    </location>
</feature>
<feature type="cross-link" description="Glycyl lysine isopeptide (Lys-Gly) (interchain with G-Cter in SUMO2)" evidence="2">
    <location>
        <position position="1382"/>
    </location>
</feature>
<feature type="cross-link" description="Glycyl lysine isopeptide (Lys-Gly) (interchain with G-Cter in SUMO2); alternate" evidence="2">
    <location>
        <position position="1418"/>
    </location>
</feature>
<feature type="cross-link" description="Glycyl lysine isopeptide (Lys-Gly) (interchain with G-Cter in SUMO2); alternate" evidence="2">
    <location>
        <position position="1438"/>
    </location>
</feature>
<feature type="cross-link" description="Glycyl lysine isopeptide (Lys-Gly) (interchain with G-Cter in SUMO2)" evidence="2">
    <location>
        <position position="1450"/>
    </location>
</feature>
<feature type="cross-link" description="Glycyl lysine isopeptide (Lys-Gly) (interchain with G-Cter in SUMO2)" evidence="2">
    <location>
        <position position="1455"/>
    </location>
</feature>
<feature type="cross-link" description="Glycyl lysine isopeptide (Lys-Gly) (interchain with G-Cter in SUMO2)" evidence="2">
    <location>
        <position position="1480"/>
    </location>
</feature>
<feature type="cross-link" description="Glycyl lysine isopeptide (Lys-Gly) (interchain with G-Cter in SUMO2)" evidence="2">
    <location>
        <position position="1488"/>
    </location>
</feature>
<feature type="sequence conflict" description="In Ref. 1; BAA02076." evidence="10" ref="1">
    <original>E</original>
    <variation>A</variation>
    <location>
        <position position="184"/>
    </location>
</feature>
<feature type="sequence conflict" description="In Ref. 1; BAA02076." evidence="10" ref="1">
    <original>S</original>
    <variation>M</variation>
    <location>
        <position position="260"/>
    </location>
</feature>
<feature type="sequence conflict" description="In Ref. 1; BAA02076." evidence="10" ref="1">
    <original>S</original>
    <variation>P</variation>
    <location>
        <position position="640"/>
    </location>
</feature>
<feature type="sequence conflict" description="In Ref. 1; BAA02076." evidence="10" ref="1">
    <original>I</original>
    <variation>N</variation>
    <location>
        <position position="841"/>
    </location>
</feature>
<feature type="sequence conflict" description="In Ref. 1; BAA02076." evidence="10" ref="1">
    <original>IP</original>
    <variation>NT</variation>
    <location>
        <begin position="844"/>
        <end position="845"/>
    </location>
</feature>
<feature type="sequence conflict" description="In Ref. 1; BAA02076 and 3; AAC52135." evidence="10" ref="1 3">
    <original>A</original>
    <variation>R</variation>
    <location>
        <position position="1316"/>
    </location>
</feature>
<organism>
    <name type="scientific">Mus musculus</name>
    <name type="common">Mouse</name>
    <dbReference type="NCBI Taxonomy" id="10090"/>
    <lineage>
        <taxon>Eukaryota</taxon>
        <taxon>Metazoa</taxon>
        <taxon>Chordata</taxon>
        <taxon>Craniata</taxon>
        <taxon>Vertebrata</taxon>
        <taxon>Euteleostomi</taxon>
        <taxon>Mammalia</taxon>
        <taxon>Eutheria</taxon>
        <taxon>Euarchontoglires</taxon>
        <taxon>Glires</taxon>
        <taxon>Rodentia</taxon>
        <taxon>Myomorpha</taxon>
        <taxon>Muroidea</taxon>
        <taxon>Muridae</taxon>
        <taxon>Murinae</taxon>
        <taxon>Mus</taxon>
        <taxon>Mus</taxon>
    </lineage>
</organism>